<dbReference type="EMBL" id="AE008922">
    <property type="protein sequence ID" value="AAM40043.1"/>
    <property type="molecule type" value="Genomic_DNA"/>
</dbReference>
<dbReference type="RefSeq" id="NP_636119.1">
    <property type="nucleotide sequence ID" value="NC_003902.1"/>
</dbReference>
<dbReference type="RefSeq" id="WP_011035965.1">
    <property type="nucleotide sequence ID" value="NC_003902.1"/>
</dbReference>
<dbReference type="SMR" id="Q8PCJ7"/>
<dbReference type="STRING" id="190485.XCC0728"/>
<dbReference type="EnsemblBacteria" id="AAM40043">
    <property type="protein sequence ID" value="AAM40043"/>
    <property type="gene ID" value="XCC0728"/>
</dbReference>
<dbReference type="KEGG" id="xcc:XCC0728"/>
<dbReference type="PATRIC" id="fig|190485.4.peg.792"/>
<dbReference type="eggNOG" id="COG1589">
    <property type="taxonomic scope" value="Bacteria"/>
</dbReference>
<dbReference type="HOGENOM" id="CLU_064041_1_1_6"/>
<dbReference type="OrthoDB" id="9790370at2"/>
<dbReference type="Proteomes" id="UP000001010">
    <property type="component" value="Chromosome"/>
</dbReference>
<dbReference type="GO" id="GO:0032153">
    <property type="term" value="C:cell division site"/>
    <property type="evidence" value="ECO:0000318"/>
    <property type="project" value="GO_Central"/>
</dbReference>
<dbReference type="GO" id="GO:1990587">
    <property type="term" value="C:FtsQBL complex"/>
    <property type="evidence" value="ECO:0000318"/>
    <property type="project" value="GO_Central"/>
</dbReference>
<dbReference type="GO" id="GO:0005886">
    <property type="term" value="C:plasma membrane"/>
    <property type="evidence" value="ECO:0000318"/>
    <property type="project" value="GO_Central"/>
</dbReference>
<dbReference type="GO" id="GO:0000917">
    <property type="term" value="P:division septum assembly"/>
    <property type="evidence" value="ECO:0000318"/>
    <property type="project" value="GO_Central"/>
</dbReference>
<dbReference type="GO" id="GO:0043093">
    <property type="term" value="P:FtsZ-dependent cytokinesis"/>
    <property type="evidence" value="ECO:0000318"/>
    <property type="project" value="GO_Central"/>
</dbReference>
<dbReference type="Gene3D" id="3.40.50.11690">
    <property type="entry name" value="Cell division protein FtsQ/DivIB"/>
    <property type="match status" value="1"/>
</dbReference>
<dbReference type="Gene3D" id="3.10.20.310">
    <property type="entry name" value="membrane protein fhac"/>
    <property type="match status" value="1"/>
</dbReference>
<dbReference type="HAMAP" id="MF_00911">
    <property type="entry name" value="FtsQ_subfam"/>
    <property type="match status" value="1"/>
</dbReference>
<dbReference type="InterPro" id="IPR005548">
    <property type="entry name" value="Cell_div_FtsQ/DivIB_C"/>
</dbReference>
<dbReference type="InterPro" id="IPR026579">
    <property type="entry name" value="FtsQ"/>
</dbReference>
<dbReference type="InterPro" id="IPR045335">
    <property type="entry name" value="FtsQ_C_sf"/>
</dbReference>
<dbReference type="InterPro" id="IPR034746">
    <property type="entry name" value="POTRA"/>
</dbReference>
<dbReference type="InterPro" id="IPR013685">
    <property type="entry name" value="POTRA_FtsQ_type"/>
</dbReference>
<dbReference type="PANTHER" id="PTHR35851">
    <property type="entry name" value="CELL DIVISION PROTEIN FTSQ"/>
    <property type="match status" value="1"/>
</dbReference>
<dbReference type="PANTHER" id="PTHR35851:SF1">
    <property type="entry name" value="CELL DIVISION PROTEIN FTSQ"/>
    <property type="match status" value="1"/>
</dbReference>
<dbReference type="Pfam" id="PF03799">
    <property type="entry name" value="FtsQ_DivIB_C"/>
    <property type="match status" value="1"/>
</dbReference>
<dbReference type="Pfam" id="PF08478">
    <property type="entry name" value="POTRA_1"/>
    <property type="match status" value="1"/>
</dbReference>
<dbReference type="PROSITE" id="PS51779">
    <property type="entry name" value="POTRA"/>
    <property type="match status" value="1"/>
</dbReference>
<accession>Q8PCJ7</accession>
<proteinExistence type="inferred from homology"/>
<organism>
    <name type="scientific">Xanthomonas campestris pv. campestris (strain ATCC 33913 / DSM 3586 / NCPPB 528 / LMG 568 / P 25)</name>
    <dbReference type="NCBI Taxonomy" id="190485"/>
    <lineage>
        <taxon>Bacteria</taxon>
        <taxon>Pseudomonadati</taxon>
        <taxon>Pseudomonadota</taxon>
        <taxon>Gammaproteobacteria</taxon>
        <taxon>Lysobacterales</taxon>
        <taxon>Lysobacteraceae</taxon>
        <taxon>Xanthomonas</taxon>
    </lineage>
</organism>
<evidence type="ECO:0000255" key="1">
    <source>
        <dbReference type="HAMAP-Rule" id="MF_00911"/>
    </source>
</evidence>
<evidence type="ECO:0000255" key="2">
    <source>
        <dbReference type="PROSITE-ProRule" id="PRU01115"/>
    </source>
</evidence>
<sequence length="278" mass="31090">MNATLRILAWLIAVALVALPVVAVLNGWVGAERWPLARLRVSGDFKRVPAEELRAVVLPYARSGFFAVKLQDAQDAIARLPWVESAQVRKRWPDVLEVHVVEHKPFARWGTDRMLSEQGRLFRTPPLLKDFKLPQLGGPDAKTQEVVALYNESRALFAPTGLDVERLEMDARGSWSLGLSNGVQIVIGRDDARARLQRFARVLPQLTDPQRPIARADLRYTNGFTVERRMENGESGMDKKPKPVPPAAPHALVLNSLRLRTPLLTIPHSPFAIPGFKT</sequence>
<gene>
    <name evidence="1" type="primary">ftsQ</name>
    <name type="ordered locus">XCC0728</name>
</gene>
<reference key="1">
    <citation type="journal article" date="2002" name="Nature">
        <title>Comparison of the genomes of two Xanthomonas pathogens with differing host specificities.</title>
        <authorList>
            <person name="da Silva A.C.R."/>
            <person name="Ferro J.A."/>
            <person name="Reinach F.C."/>
            <person name="Farah C.S."/>
            <person name="Furlan L.R."/>
            <person name="Quaggio R.B."/>
            <person name="Monteiro-Vitorello C.B."/>
            <person name="Van Sluys M.A."/>
            <person name="Almeida N.F. Jr."/>
            <person name="Alves L.M.C."/>
            <person name="do Amaral A.M."/>
            <person name="Bertolini M.C."/>
            <person name="Camargo L.E.A."/>
            <person name="Camarotte G."/>
            <person name="Cannavan F."/>
            <person name="Cardozo J."/>
            <person name="Chambergo F."/>
            <person name="Ciapina L.P."/>
            <person name="Cicarelli R.M.B."/>
            <person name="Coutinho L.L."/>
            <person name="Cursino-Santos J.R."/>
            <person name="El-Dorry H."/>
            <person name="Faria J.B."/>
            <person name="Ferreira A.J.S."/>
            <person name="Ferreira R.C.C."/>
            <person name="Ferro M.I.T."/>
            <person name="Formighieri E.F."/>
            <person name="Franco M.C."/>
            <person name="Greggio C.C."/>
            <person name="Gruber A."/>
            <person name="Katsuyama A.M."/>
            <person name="Kishi L.T."/>
            <person name="Leite R.P."/>
            <person name="Lemos E.G.M."/>
            <person name="Lemos M.V.F."/>
            <person name="Locali E.C."/>
            <person name="Machado M.A."/>
            <person name="Madeira A.M.B.N."/>
            <person name="Martinez-Rossi N.M."/>
            <person name="Martins E.C."/>
            <person name="Meidanis J."/>
            <person name="Menck C.F.M."/>
            <person name="Miyaki C.Y."/>
            <person name="Moon D.H."/>
            <person name="Moreira L.M."/>
            <person name="Novo M.T.M."/>
            <person name="Okura V.K."/>
            <person name="Oliveira M.C."/>
            <person name="Oliveira V.R."/>
            <person name="Pereira H.A."/>
            <person name="Rossi A."/>
            <person name="Sena J.A.D."/>
            <person name="Silva C."/>
            <person name="de Souza R.F."/>
            <person name="Spinola L.A.F."/>
            <person name="Takita M.A."/>
            <person name="Tamura R.E."/>
            <person name="Teixeira E.C."/>
            <person name="Tezza R.I.D."/>
            <person name="Trindade dos Santos M."/>
            <person name="Truffi D."/>
            <person name="Tsai S.M."/>
            <person name="White F.F."/>
            <person name="Setubal J.C."/>
            <person name="Kitajima J.P."/>
        </authorList>
    </citation>
    <scope>NUCLEOTIDE SEQUENCE [LARGE SCALE GENOMIC DNA]</scope>
    <source>
        <strain>ATCC 33913 / DSM 3586 / NCPPB 528 / LMG 568 / P 25</strain>
    </source>
</reference>
<keyword id="KW-0131">Cell cycle</keyword>
<keyword id="KW-0132">Cell division</keyword>
<keyword id="KW-0997">Cell inner membrane</keyword>
<keyword id="KW-1003">Cell membrane</keyword>
<keyword id="KW-0472">Membrane</keyword>
<keyword id="KW-1185">Reference proteome</keyword>
<keyword id="KW-0812">Transmembrane</keyword>
<keyword id="KW-1133">Transmembrane helix</keyword>
<feature type="chain" id="PRO_0000414702" description="Cell division protein FtsQ">
    <location>
        <begin position="1"/>
        <end position="278"/>
    </location>
</feature>
<feature type="topological domain" description="Cytoplasmic" evidence="1">
    <location>
        <begin position="1"/>
        <end position="6"/>
    </location>
</feature>
<feature type="transmembrane region" description="Helical" evidence="1">
    <location>
        <begin position="7"/>
        <end position="27"/>
    </location>
</feature>
<feature type="topological domain" description="Periplasmic" evidence="1">
    <location>
        <begin position="28"/>
        <end position="278"/>
    </location>
</feature>
<feature type="domain" description="POTRA" evidence="2">
    <location>
        <begin position="34"/>
        <end position="103"/>
    </location>
</feature>
<protein>
    <recommendedName>
        <fullName evidence="1">Cell division protein FtsQ</fullName>
    </recommendedName>
</protein>
<comment type="function">
    <text evidence="1">Essential cell division protein. May link together the upstream cell division proteins, which are predominantly cytoplasmic, with the downstream cell division proteins, which are predominantly periplasmic. May control correct divisome assembly.</text>
</comment>
<comment type="subunit">
    <text evidence="1">Part of a complex composed of FtsB, FtsL and FtsQ.</text>
</comment>
<comment type="subcellular location">
    <subcellularLocation>
        <location evidence="1">Cell inner membrane</location>
        <topology evidence="1">Single-pass type II membrane protein</topology>
    </subcellularLocation>
    <text evidence="1">Localizes to the division septum.</text>
</comment>
<comment type="similarity">
    <text evidence="1">Belongs to the FtsQ/DivIB family. FtsQ subfamily.</text>
</comment>
<name>FTSQ_XANCP</name>